<gene>
    <name evidence="1" type="primary">mraZ</name>
    <name type="ordered locus">Noc_2870</name>
</gene>
<name>MRAZ_NITOC</name>
<feature type="chain" id="PRO_0000230094" description="Transcriptional regulator MraZ">
    <location>
        <begin position="1"/>
        <end position="149"/>
    </location>
</feature>
<feature type="domain" description="SpoVT-AbrB 1" evidence="2">
    <location>
        <begin position="5"/>
        <end position="52"/>
    </location>
</feature>
<feature type="domain" description="SpoVT-AbrB 2" evidence="2">
    <location>
        <begin position="81"/>
        <end position="124"/>
    </location>
</feature>
<comment type="subunit">
    <text evidence="1">Forms oligomers.</text>
</comment>
<comment type="subcellular location">
    <subcellularLocation>
        <location evidence="1">Cytoplasm</location>
        <location evidence="1">Nucleoid</location>
    </subcellularLocation>
</comment>
<comment type="similarity">
    <text evidence="1">Belongs to the MraZ family.</text>
</comment>
<accession>Q3J780</accession>
<organism>
    <name type="scientific">Nitrosococcus oceani (strain ATCC 19707 / BCRC 17464 / JCM 30415 / NCIMB 11848 / C-107)</name>
    <dbReference type="NCBI Taxonomy" id="323261"/>
    <lineage>
        <taxon>Bacteria</taxon>
        <taxon>Pseudomonadati</taxon>
        <taxon>Pseudomonadota</taxon>
        <taxon>Gammaproteobacteria</taxon>
        <taxon>Chromatiales</taxon>
        <taxon>Chromatiaceae</taxon>
        <taxon>Nitrosococcus</taxon>
    </lineage>
</organism>
<protein>
    <recommendedName>
        <fullName>Transcriptional regulator MraZ</fullName>
    </recommendedName>
</protein>
<sequence length="149" mass="17035">MFRGITTLNLDAKGRLSIPAKYRKSLGICCDGKVIITVDLLEPCLQLYPLPEWEIVERKLVALPSHNRQARYIKRRLIGHAEECELDGHGRILLPLELRSRTELGKNISLVGQGNKFELWDSMVWERQMAKEEASAKEELTRELALLAL</sequence>
<evidence type="ECO:0000255" key="1">
    <source>
        <dbReference type="HAMAP-Rule" id="MF_01008"/>
    </source>
</evidence>
<evidence type="ECO:0000255" key="2">
    <source>
        <dbReference type="PROSITE-ProRule" id="PRU01076"/>
    </source>
</evidence>
<keyword id="KW-0963">Cytoplasm</keyword>
<keyword id="KW-0238">DNA-binding</keyword>
<keyword id="KW-1185">Reference proteome</keyword>
<keyword id="KW-0677">Repeat</keyword>
<keyword id="KW-0804">Transcription</keyword>
<keyword id="KW-0805">Transcription regulation</keyword>
<dbReference type="EMBL" id="CP000127">
    <property type="protein sequence ID" value="ABA59316.1"/>
    <property type="molecule type" value="Genomic_DNA"/>
</dbReference>
<dbReference type="RefSeq" id="WP_002812897.1">
    <property type="nucleotide sequence ID" value="NC_007484.1"/>
</dbReference>
<dbReference type="SMR" id="Q3J780"/>
<dbReference type="FunCoup" id="Q3J780">
    <property type="interactions" value="213"/>
</dbReference>
<dbReference type="STRING" id="323261.Noc_2870"/>
<dbReference type="KEGG" id="noc:Noc_2870"/>
<dbReference type="eggNOG" id="COG2001">
    <property type="taxonomic scope" value="Bacteria"/>
</dbReference>
<dbReference type="HOGENOM" id="CLU_107907_2_0_6"/>
<dbReference type="InParanoid" id="Q3J780"/>
<dbReference type="Proteomes" id="UP000006838">
    <property type="component" value="Chromosome"/>
</dbReference>
<dbReference type="GO" id="GO:0005737">
    <property type="term" value="C:cytoplasm"/>
    <property type="evidence" value="ECO:0007669"/>
    <property type="project" value="UniProtKB-UniRule"/>
</dbReference>
<dbReference type="GO" id="GO:0009295">
    <property type="term" value="C:nucleoid"/>
    <property type="evidence" value="ECO:0007669"/>
    <property type="project" value="UniProtKB-SubCell"/>
</dbReference>
<dbReference type="GO" id="GO:0003700">
    <property type="term" value="F:DNA-binding transcription factor activity"/>
    <property type="evidence" value="ECO:0007669"/>
    <property type="project" value="UniProtKB-UniRule"/>
</dbReference>
<dbReference type="GO" id="GO:0000976">
    <property type="term" value="F:transcription cis-regulatory region binding"/>
    <property type="evidence" value="ECO:0007669"/>
    <property type="project" value="TreeGrafter"/>
</dbReference>
<dbReference type="GO" id="GO:2000143">
    <property type="term" value="P:negative regulation of DNA-templated transcription initiation"/>
    <property type="evidence" value="ECO:0007669"/>
    <property type="project" value="TreeGrafter"/>
</dbReference>
<dbReference type="CDD" id="cd16321">
    <property type="entry name" value="MraZ_C"/>
    <property type="match status" value="1"/>
</dbReference>
<dbReference type="CDD" id="cd16320">
    <property type="entry name" value="MraZ_N"/>
    <property type="match status" value="1"/>
</dbReference>
<dbReference type="Gene3D" id="3.40.1550.20">
    <property type="entry name" value="Transcriptional regulator MraZ domain"/>
    <property type="match status" value="1"/>
</dbReference>
<dbReference type="HAMAP" id="MF_01008">
    <property type="entry name" value="MraZ"/>
    <property type="match status" value="1"/>
</dbReference>
<dbReference type="InterPro" id="IPR003444">
    <property type="entry name" value="MraZ"/>
</dbReference>
<dbReference type="InterPro" id="IPR035644">
    <property type="entry name" value="MraZ_C"/>
</dbReference>
<dbReference type="InterPro" id="IPR020603">
    <property type="entry name" value="MraZ_dom"/>
</dbReference>
<dbReference type="InterPro" id="IPR035642">
    <property type="entry name" value="MraZ_N"/>
</dbReference>
<dbReference type="InterPro" id="IPR038619">
    <property type="entry name" value="MraZ_sf"/>
</dbReference>
<dbReference type="InterPro" id="IPR007159">
    <property type="entry name" value="SpoVT-AbrB_dom"/>
</dbReference>
<dbReference type="InterPro" id="IPR037914">
    <property type="entry name" value="SpoVT-AbrB_sf"/>
</dbReference>
<dbReference type="NCBIfam" id="TIGR00242">
    <property type="entry name" value="division/cell wall cluster transcriptional repressor MraZ"/>
    <property type="match status" value="1"/>
</dbReference>
<dbReference type="PANTHER" id="PTHR34701">
    <property type="entry name" value="TRANSCRIPTIONAL REGULATOR MRAZ"/>
    <property type="match status" value="1"/>
</dbReference>
<dbReference type="PANTHER" id="PTHR34701:SF1">
    <property type="entry name" value="TRANSCRIPTIONAL REGULATOR MRAZ"/>
    <property type="match status" value="1"/>
</dbReference>
<dbReference type="Pfam" id="PF02381">
    <property type="entry name" value="MraZ"/>
    <property type="match status" value="2"/>
</dbReference>
<dbReference type="SUPFAM" id="SSF89447">
    <property type="entry name" value="AbrB/MazE/MraZ-like"/>
    <property type="match status" value="1"/>
</dbReference>
<dbReference type="PROSITE" id="PS51740">
    <property type="entry name" value="SPOVT_ABRB"/>
    <property type="match status" value="2"/>
</dbReference>
<proteinExistence type="inferred from homology"/>
<reference key="1">
    <citation type="journal article" date="2006" name="Appl. Environ. Microbiol.">
        <title>Complete genome sequence of the marine, chemolithoautotrophic, ammonia-oxidizing bacterium Nitrosococcus oceani ATCC 19707.</title>
        <authorList>
            <person name="Klotz M.G."/>
            <person name="Arp D.J."/>
            <person name="Chain P.S.G."/>
            <person name="El-Sheikh A.F."/>
            <person name="Hauser L.J."/>
            <person name="Hommes N.G."/>
            <person name="Larimer F.W."/>
            <person name="Malfatti S.A."/>
            <person name="Norton J.M."/>
            <person name="Poret-Peterson A.T."/>
            <person name="Vergez L.M."/>
            <person name="Ward B.B."/>
        </authorList>
    </citation>
    <scope>NUCLEOTIDE SEQUENCE [LARGE SCALE GENOMIC DNA]</scope>
    <source>
        <strain>ATCC 19707 / BCRC 17464 / JCM 30415 / NCIMB 11848 / C-107</strain>
    </source>
</reference>